<name>VMA21_SCLS1</name>
<dbReference type="EMBL" id="CH476642">
    <property type="protein sequence ID" value="EDN98025.1"/>
    <property type="molecule type" value="Genomic_DNA"/>
</dbReference>
<dbReference type="RefSeq" id="XP_001586304.1">
    <property type="nucleotide sequence ID" value="XM_001586254.1"/>
</dbReference>
<dbReference type="SMR" id="A7F5K4"/>
<dbReference type="FunCoup" id="A7F5K4">
    <property type="interactions" value="47"/>
</dbReference>
<dbReference type="STRING" id="665079.A7F5K4"/>
<dbReference type="GeneID" id="5482365"/>
<dbReference type="KEGG" id="ssl:SS1G_12882"/>
<dbReference type="VEuPathDB" id="FungiDB:sscle_02g012130"/>
<dbReference type="InParanoid" id="A7F5K4"/>
<dbReference type="OMA" id="AMKEDQT"/>
<dbReference type="OrthoDB" id="160405at2759"/>
<dbReference type="Proteomes" id="UP000001312">
    <property type="component" value="Unassembled WGS sequence"/>
</dbReference>
<dbReference type="GO" id="GO:0005789">
    <property type="term" value="C:endoplasmic reticulum membrane"/>
    <property type="evidence" value="ECO:0000318"/>
    <property type="project" value="GO_Central"/>
</dbReference>
<dbReference type="GO" id="GO:0033116">
    <property type="term" value="C:endoplasmic reticulum-Golgi intermediate compartment membrane"/>
    <property type="evidence" value="ECO:0007669"/>
    <property type="project" value="UniProtKB-SubCell"/>
</dbReference>
<dbReference type="GO" id="GO:0012507">
    <property type="term" value="C:ER to Golgi transport vesicle membrane"/>
    <property type="evidence" value="ECO:0007669"/>
    <property type="project" value="UniProtKB-SubCell"/>
</dbReference>
<dbReference type="GO" id="GO:0070072">
    <property type="term" value="P:vacuolar proton-transporting V-type ATPase complex assembly"/>
    <property type="evidence" value="ECO:0000318"/>
    <property type="project" value="GO_Central"/>
</dbReference>
<dbReference type="HAMAP" id="MF_03058">
    <property type="entry name" value="VMA21"/>
    <property type="match status" value="1"/>
</dbReference>
<dbReference type="InterPro" id="IPR019013">
    <property type="entry name" value="Vma21"/>
</dbReference>
<dbReference type="PANTHER" id="PTHR31792">
    <property type="entry name" value="VACUOLAR ATPASE ASSEMBLY INTEGRAL MEMBRANE PROTEIN VMA21"/>
    <property type="match status" value="1"/>
</dbReference>
<dbReference type="PANTHER" id="PTHR31792:SF3">
    <property type="entry name" value="VACUOLAR ATPASE ASSEMBLY INTEGRAL MEMBRANE PROTEIN VMA21"/>
    <property type="match status" value="1"/>
</dbReference>
<dbReference type="Pfam" id="PF09446">
    <property type="entry name" value="VMA21"/>
    <property type="match status" value="1"/>
</dbReference>
<sequence>MATQRRSHNDRIAAGEEKEASFKAEAVLGEKSNIAPAVPAHIIYKLLGFTLAMIIIPISSYFLTLNSIFRGNSTFAGATAAIMANVVLVGYVIVAMKEDQSEALEAAAAKETKTESKKEL</sequence>
<protein>
    <recommendedName>
        <fullName evidence="1">Vacuolar ATPase assembly integral membrane protein vma21</fullName>
    </recommendedName>
</protein>
<keyword id="KW-0968">Cytoplasmic vesicle</keyword>
<keyword id="KW-0256">Endoplasmic reticulum</keyword>
<keyword id="KW-0472">Membrane</keyword>
<keyword id="KW-1185">Reference proteome</keyword>
<keyword id="KW-0812">Transmembrane</keyword>
<keyword id="KW-1133">Transmembrane helix</keyword>
<proteinExistence type="inferred from homology"/>
<reference key="1">
    <citation type="journal article" date="2011" name="PLoS Genet.">
        <title>Genomic analysis of the necrotrophic fungal pathogens Sclerotinia sclerotiorum and Botrytis cinerea.</title>
        <authorList>
            <person name="Amselem J."/>
            <person name="Cuomo C.A."/>
            <person name="van Kan J.A.L."/>
            <person name="Viaud M."/>
            <person name="Benito E.P."/>
            <person name="Couloux A."/>
            <person name="Coutinho P.M."/>
            <person name="de Vries R.P."/>
            <person name="Dyer P.S."/>
            <person name="Fillinger S."/>
            <person name="Fournier E."/>
            <person name="Gout L."/>
            <person name="Hahn M."/>
            <person name="Kohn L."/>
            <person name="Lapalu N."/>
            <person name="Plummer K.M."/>
            <person name="Pradier J.-M."/>
            <person name="Quevillon E."/>
            <person name="Sharon A."/>
            <person name="Simon A."/>
            <person name="ten Have A."/>
            <person name="Tudzynski B."/>
            <person name="Tudzynski P."/>
            <person name="Wincker P."/>
            <person name="Andrew M."/>
            <person name="Anthouard V."/>
            <person name="Beever R.E."/>
            <person name="Beffa R."/>
            <person name="Benoit I."/>
            <person name="Bouzid O."/>
            <person name="Brault B."/>
            <person name="Chen Z."/>
            <person name="Choquer M."/>
            <person name="Collemare J."/>
            <person name="Cotton P."/>
            <person name="Danchin E.G."/>
            <person name="Da Silva C."/>
            <person name="Gautier A."/>
            <person name="Giraud C."/>
            <person name="Giraud T."/>
            <person name="Gonzalez C."/>
            <person name="Grossetete S."/>
            <person name="Gueldener U."/>
            <person name="Henrissat B."/>
            <person name="Howlett B.J."/>
            <person name="Kodira C."/>
            <person name="Kretschmer M."/>
            <person name="Lappartient A."/>
            <person name="Leroch M."/>
            <person name="Levis C."/>
            <person name="Mauceli E."/>
            <person name="Neuveglise C."/>
            <person name="Oeser B."/>
            <person name="Pearson M."/>
            <person name="Poulain J."/>
            <person name="Poussereau N."/>
            <person name="Quesneville H."/>
            <person name="Rascle C."/>
            <person name="Schumacher J."/>
            <person name="Segurens B."/>
            <person name="Sexton A."/>
            <person name="Silva E."/>
            <person name="Sirven C."/>
            <person name="Soanes D.M."/>
            <person name="Talbot N.J."/>
            <person name="Templeton M."/>
            <person name="Yandava C."/>
            <person name="Yarden O."/>
            <person name="Zeng Q."/>
            <person name="Rollins J.A."/>
            <person name="Lebrun M.-H."/>
            <person name="Dickman M."/>
        </authorList>
    </citation>
    <scope>NUCLEOTIDE SEQUENCE [LARGE SCALE GENOMIC DNA]</scope>
    <source>
        <strain>ATCC 18683 / 1980 / Ss-1</strain>
    </source>
</reference>
<evidence type="ECO:0000255" key="1">
    <source>
        <dbReference type="HAMAP-Rule" id="MF_03058"/>
    </source>
</evidence>
<organism>
    <name type="scientific">Sclerotinia sclerotiorum (strain ATCC 18683 / 1980 / Ss-1)</name>
    <name type="common">White mold</name>
    <name type="synonym">Whetzelinia sclerotiorum</name>
    <dbReference type="NCBI Taxonomy" id="665079"/>
    <lineage>
        <taxon>Eukaryota</taxon>
        <taxon>Fungi</taxon>
        <taxon>Dikarya</taxon>
        <taxon>Ascomycota</taxon>
        <taxon>Pezizomycotina</taxon>
        <taxon>Leotiomycetes</taxon>
        <taxon>Helotiales</taxon>
        <taxon>Sclerotiniaceae</taxon>
        <taxon>Sclerotinia</taxon>
    </lineage>
</organism>
<gene>
    <name type="primary">vma21</name>
    <name type="ORF">SS1G_12882</name>
</gene>
<accession>A7F5K4</accession>
<comment type="function">
    <text evidence="1">Required for the assembly of the V0 complex of the vacuolar ATPase (V-ATPase) in the endoplasmic reticulum.</text>
</comment>
<comment type="subcellular location">
    <subcellularLocation>
        <location evidence="1">Endoplasmic reticulum membrane</location>
        <topology evidence="1">Multi-pass membrane protein</topology>
    </subcellularLocation>
    <subcellularLocation>
        <location evidence="1">Endoplasmic reticulum-Golgi intermediate compartment membrane</location>
        <topology evidence="1">Multi-pass membrane protein</topology>
    </subcellularLocation>
    <subcellularLocation>
        <location evidence="1">Cytoplasmic vesicle</location>
        <location evidence="1">COPII-coated vesicle membrane</location>
        <topology evidence="1">Multi-pass membrane protein</topology>
    </subcellularLocation>
</comment>
<comment type="similarity">
    <text evidence="1">Belongs to the VMA21 family.</text>
</comment>
<feature type="chain" id="PRO_0000377597" description="Vacuolar ATPase assembly integral membrane protein vma21">
    <location>
        <begin position="1"/>
        <end position="120"/>
    </location>
</feature>
<feature type="topological domain" description="Cytoplasmic" evidence="1">
    <location>
        <begin position="1"/>
        <end position="37"/>
    </location>
</feature>
<feature type="transmembrane region" description="Helical" evidence="1">
    <location>
        <begin position="38"/>
        <end position="58"/>
    </location>
</feature>
<feature type="topological domain" description="Lumenal" evidence="1">
    <location>
        <begin position="59"/>
        <end position="74"/>
    </location>
</feature>
<feature type="transmembrane region" description="Helical" evidence="1">
    <location>
        <begin position="75"/>
        <end position="95"/>
    </location>
</feature>
<feature type="topological domain" description="Cytoplasmic" evidence="1">
    <location>
        <begin position="96"/>
        <end position="120"/>
    </location>
</feature>
<feature type="short sequence motif" description="Prevents secretion from ER">
    <location>
        <begin position="117"/>
        <end position="120"/>
    </location>
</feature>